<proteinExistence type="inferred from homology"/>
<keyword id="KW-0175">Coiled coil</keyword>
<keyword id="KW-0539">Nucleus</keyword>
<keyword id="KW-1185">Reference proteome</keyword>
<keyword id="KW-0690">Ribosome biogenesis</keyword>
<keyword id="KW-0698">rRNA processing</keyword>
<protein>
    <recommendedName>
        <fullName evidence="1">Pescadillo homolog</fullName>
    </recommendedName>
    <alternativeName>
        <fullName evidence="1">Nucleolar protein 7 homolog</fullName>
    </alternativeName>
</protein>
<accession>Q4WP65</accession>
<gene>
    <name type="primary">nop7</name>
    <name type="ORF">AFUA_4G08190</name>
</gene>
<organism>
    <name type="scientific">Aspergillus fumigatus (strain ATCC MYA-4609 / CBS 101355 / FGSC A1100 / Af293)</name>
    <name type="common">Neosartorya fumigata</name>
    <dbReference type="NCBI Taxonomy" id="330879"/>
    <lineage>
        <taxon>Eukaryota</taxon>
        <taxon>Fungi</taxon>
        <taxon>Dikarya</taxon>
        <taxon>Ascomycota</taxon>
        <taxon>Pezizomycotina</taxon>
        <taxon>Eurotiomycetes</taxon>
        <taxon>Eurotiomycetidae</taxon>
        <taxon>Eurotiales</taxon>
        <taxon>Aspergillaceae</taxon>
        <taxon>Aspergillus</taxon>
        <taxon>Aspergillus subgen. Fumigati</taxon>
    </lineage>
</organism>
<feature type="chain" id="PRO_0000370480" description="Pescadillo homolog">
    <location>
        <begin position="1"/>
        <end position="675"/>
    </location>
</feature>
<feature type="domain" description="BRCT" evidence="1">
    <location>
        <begin position="352"/>
        <end position="471"/>
    </location>
</feature>
<feature type="region of interest" description="Disordered" evidence="2">
    <location>
        <begin position="309"/>
        <end position="331"/>
    </location>
</feature>
<feature type="region of interest" description="Disordered" evidence="2">
    <location>
        <begin position="475"/>
        <end position="675"/>
    </location>
</feature>
<feature type="coiled-coil region" evidence="1">
    <location>
        <begin position="551"/>
        <end position="675"/>
    </location>
</feature>
<feature type="compositionally biased region" description="Acidic residues" evidence="2">
    <location>
        <begin position="498"/>
        <end position="518"/>
    </location>
</feature>
<feature type="compositionally biased region" description="Basic and acidic residues" evidence="2">
    <location>
        <begin position="519"/>
        <end position="530"/>
    </location>
</feature>
<feature type="compositionally biased region" description="Acidic residues" evidence="2">
    <location>
        <begin position="532"/>
        <end position="541"/>
    </location>
</feature>
<feature type="compositionally biased region" description="Acidic residues" evidence="2">
    <location>
        <begin position="549"/>
        <end position="580"/>
    </location>
</feature>
<feature type="compositionally biased region" description="Basic and acidic residues" evidence="2">
    <location>
        <begin position="581"/>
        <end position="591"/>
    </location>
</feature>
<feature type="compositionally biased region" description="Basic residues" evidence="2">
    <location>
        <begin position="611"/>
        <end position="623"/>
    </location>
</feature>
<feature type="compositionally biased region" description="Basic and acidic residues" evidence="2">
    <location>
        <begin position="624"/>
        <end position="634"/>
    </location>
</feature>
<reference key="1">
    <citation type="journal article" date="2005" name="Nature">
        <title>Genomic sequence of the pathogenic and allergenic filamentous fungus Aspergillus fumigatus.</title>
        <authorList>
            <person name="Nierman W.C."/>
            <person name="Pain A."/>
            <person name="Anderson M.J."/>
            <person name="Wortman J.R."/>
            <person name="Kim H.S."/>
            <person name="Arroyo J."/>
            <person name="Berriman M."/>
            <person name="Abe K."/>
            <person name="Archer D.B."/>
            <person name="Bermejo C."/>
            <person name="Bennett J.W."/>
            <person name="Bowyer P."/>
            <person name="Chen D."/>
            <person name="Collins M."/>
            <person name="Coulsen R."/>
            <person name="Davies R."/>
            <person name="Dyer P.S."/>
            <person name="Farman M.L."/>
            <person name="Fedorova N."/>
            <person name="Fedorova N.D."/>
            <person name="Feldblyum T.V."/>
            <person name="Fischer R."/>
            <person name="Fosker N."/>
            <person name="Fraser A."/>
            <person name="Garcia J.L."/>
            <person name="Garcia M.J."/>
            <person name="Goble A."/>
            <person name="Goldman G.H."/>
            <person name="Gomi K."/>
            <person name="Griffith-Jones S."/>
            <person name="Gwilliam R."/>
            <person name="Haas B.J."/>
            <person name="Haas H."/>
            <person name="Harris D.E."/>
            <person name="Horiuchi H."/>
            <person name="Huang J."/>
            <person name="Humphray S."/>
            <person name="Jimenez J."/>
            <person name="Keller N."/>
            <person name="Khouri H."/>
            <person name="Kitamoto K."/>
            <person name="Kobayashi T."/>
            <person name="Konzack S."/>
            <person name="Kulkarni R."/>
            <person name="Kumagai T."/>
            <person name="Lafton A."/>
            <person name="Latge J.-P."/>
            <person name="Li W."/>
            <person name="Lord A."/>
            <person name="Lu C."/>
            <person name="Majoros W.H."/>
            <person name="May G.S."/>
            <person name="Miller B.L."/>
            <person name="Mohamoud Y."/>
            <person name="Molina M."/>
            <person name="Monod M."/>
            <person name="Mouyna I."/>
            <person name="Mulligan S."/>
            <person name="Murphy L.D."/>
            <person name="O'Neil S."/>
            <person name="Paulsen I."/>
            <person name="Penalva M.A."/>
            <person name="Pertea M."/>
            <person name="Price C."/>
            <person name="Pritchard B.L."/>
            <person name="Quail M.A."/>
            <person name="Rabbinowitsch E."/>
            <person name="Rawlins N."/>
            <person name="Rajandream M.A."/>
            <person name="Reichard U."/>
            <person name="Renauld H."/>
            <person name="Robson G.D."/>
            <person name="Rodriguez de Cordoba S."/>
            <person name="Rodriguez-Pena J.M."/>
            <person name="Ronning C.M."/>
            <person name="Rutter S."/>
            <person name="Salzberg S.L."/>
            <person name="Sanchez M."/>
            <person name="Sanchez-Ferrero J.C."/>
            <person name="Saunders D."/>
            <person name="Seeger K."/>
            <person name="Squares R."/>
            <person name="Squares S."/>
            <person name="Takeuchi M."/>
            <person name="Tekaia F."/>
            <person name="Turner G."/>
            <person name="Vazquez de Aldana C.R."/>
            <person name="Weidman J."/>
            <person name="White O."/>
            <person name="Woodward J.R."/>
            <person name="Yu J.-H."/>
            <person name="Fraser C.M."/>
            <person name="Galagan J.E."/>
            <person name="Asai K."/>
            <person name="Machida M."/>
            <person name="Hall N."/>
            <person name="Barrell B.G."/>
            <person name="Denning D.W."/>
        </authorList>
    </citation>
    <scope>NUCLEOTIDE SEQUENCE [LARGE SCALE GENOMIC DNA]</scope>
    <source>
        <strain>ATCC MYA-4609 / CBS 101355 / FGSC A1100 / Af293</strain>
    </source>
</reference>
<evidence type="ECO:0000255" key="1">
    <source>
        <dbReference type="HAMAP-Rule" id="MF_03028"/>
    </source>
</evidence>
<evidence type="ECO:0000256" key="2">
    <source>
        <dbReference type="SAM" id="MobiDB-lite"/>
    </source>
</evidence>
<comment type="function">
    <text evidence="1">Component of the NOP7 complex, which is required for maturation of the 25S and 5.8S ribosomal RNAs and formation of the 60S ribosome.</text>
</comment>
<comment type="subunit">
    <text evidence="1">Component of the NOP7 complex, composed of erb1, nop7 and ytm1. The complex is held together by erb1, which interacts with nop7 via its N-terminal domain and with ytm1 via a high-affinity interaction between the seven-bladed beta-propeller domains of the 2 proteins. The NOP7 complex associates with the 66S pre-ribosome.</text>
</comment>
<comment type="subcellular location">
    <subcellularLocation>
        <location evidence="1">Nucleus</location>
        <location evidence="1">Nucleolus</location>
    </subcellularLocation>
    <subcellularLocation>
        <location evidence="1">Nucleus</location>
        <location evidence="1">Nucleoplasm</location>
    </subcellularLocation>
</comment>
<comment type="similarity">
    <text evidence="1">Belongs to the pescadillo family.</text>
</comment>
<name>PESC_ASPFU</name>
<sequence length="675" mass="75396">MGKIKKKGTSGQAKNYITRTQAVRKLQISLPDFRRLCIFKGIYPREPRNKKKASKTSTPNTTFYYTKDIQYLLHEPLLRKFREQKAVAKKIARSLGRGEVGDAARLEKNHAPKLTLDHVIKERYPTFIDALRDLDDALSLLFLFANLPSTAHVPPKTIALCQRLCHEFQHYLITTNSLRKSFLSIKGIYYQATIQGQDILWLVPYRFVQRVNGDVDYRIMATFVDFYTTLLGFVNFRLYSSIGLRYPPKFDTRSDENGAELAAFTLEGRGVGDAPKAIEAGNTQATTSTNNKEVSKEIQAKVDNVIKSAGLDEAKEEPAAETTEESSETIDKFEPAAPEADTLPQPDLSGNEAGSLFAPFTFYISREAPRAPLEFILRAFGCKRIGWDAVLGDGAFTHDETDTRITHQIVDRPQLPESSLPAIPAASKDGSDAVQKVKPGTRIPGRTYVQPQWVWDCINEGRLVRPDLYAPGATLPPHLSPWVKPSRGGYDPKASLAEQEEEGEAELDEDSDEEMEEATSDKKAEAKADVGSESEDEDESVDGGMDVAGTDDDESESEDEEEDFDGFEEEAASESEDEEEAARTQHQKELEAEAAGLPFSSNGATSDGSKKKASQAKKIAAKKRKEEEELERQKMMMSRKKRKLLEKMIYSNKKQSEEAAKLRSKRRKLEKGAAK</sequence>
<dbReference type="EMBL" id="AAHF01000005">
    <property type="protein sequence ID" value="EAL89969.1"/>
    <property type="molecule type" value="Genomic_DNA"/>
</dbReference>
<dbReference type="RefSeq" id="XP_752007.1">
    <property type="nucleotide sequence ID" value="XM_746914.1"/>
</dbReference>
<dbReference type="SMR" id="Q4WP65"/>
<dbReference type="FunCoup" id="Q4WP65">
    <property type="interactions" value="1268"/>
</dbReference>
<dbReference type="STRING" id="330879.Q4WP65"/>
<dbReference type="EnsemblFungi" id="EAL89969">
    <property type="protein sequence ID" value="EAL89969"/>
    <property type="gene ID" value="AFUA_4G08190"/>
</dbReference>
<dbReference type="GeneID" id="3508981"/>
<dbReference type="KEGG" id="afm:AFUA_4G08190"/>
<dbReference type="VEuPathDB" id="FungiDB:Afu4g08190"/>
<dbReference type="eggNOG" id="KOG2481">
    <property type="taxonomic scope" value="Eukaryota"/>
</dbReference>
<dbReference type="HOGENOM" id="CLU_019619_1_1_1"/>
<dbReference type="InParanoid" id="Q4WP65"/>
<dbReference type="OMA" id="QKVTWIV"/>
<dbReference type="OrthoDB" id="10264910at2759"/>
<dbReference type="Proteomes" id="UP000002530">
    <property type="component" value="Chromosome 4"/>
</dbReference>
<dbReference type="GO" id="GO:0005654">
    <property type="term" value="C:nucleoplasm"/>
    <property type="evidence" value="ECO:0007669"/>
    <property type="project" value="UniProtKB-SubCell"/>
</dbReference>
<dbReference type="GO" id="GO:0070545">
    <property type="term" value="C:PeBoW complex"/>
    <property type="evidence" value="ECO:0000318"/>
    <property type="project" value="GO_Central"/>
</dbReference>
<dbReference type="GO" id="GO:0030687">
    <property type="term" value="C:preribosome, large subunit precursor"/>
    <property type="evidence" value="ECO:0007669"/>
    <property type="project" value="UniProtKB-UniRule"/>
</dbReference>
<dbReference type="GO" id="GO:0043021">
    <property type="term" value="F:ribonucleoprotein complex binding"/>
    <property type="evidence" value="ECO:0007669"/>
    <property type="project" value="UniProtKB-UniRule"/>
</dbReference>
<dbReference type="GO" id="GO:0003723">
    <property type="term" value="F:RNA binding"/>
    <property type="evidence" value="ECO:0000318"/>
    <property type="project" value="GO_Central"/>
</dbReference>
<dbReference type="GO" id="GO:0000466">
    <property type="term" value="P:maturation of 5.8S rRNA from tricistronic rRNA transcript (SSU-rRNA, 5.8S rRNA, LSU-rRNA)"/>
    <property type="evidence" value="ECO:0007669"/>
    <property type="project" value="UniProtKB-UniRule"/>
</dbReference>
<dbReference type="GO" id="GO:0000463">
    <property type="term" value="P:maturation of LSU-rRNA from tricistronic rRNA transcript (SSU-rRNA, 5.8S rRNA, LSU-rRNA)"/>
    <property type="evidence" value="ECO:0000318"/>
    <property type="project" value="GO_Central"/>
</dbReference>
<dbReference type="CDD" id="cd17709">
    <property type="entry name" value="BRCT_pescadillo_like"/>
    <property type="match status" value="1"/>
</dbReference>
<dbReference type="FunFam" id="3.40.50.10190:FF:000056">
    <property type="entry name" value="Pescadillo homolog"/>
    <property type="match status" value="1"/>
</dbReference>
<dbReference type="Gene3D" id="3.40.50.10190">
    <property type="entry name" value="BRCT domain"/>
    <property type="match status" value="1"/>
</dbReference>
<dbReference type="HAMAP" id="MF_03028">
    <property type="entry name" value="Pescadillo"/>
    <property type="match status" value="1"/>
</dbReference>
<dbReference type="InterPro" id="IPR001357">
    <property type="entry name" value="BRCT_dom"/>
</dbReference>
<dbReference type="InterPro" id="IPR036420">
    <property type="entry name" value="BRCT_dom_sf"/>
</dbReference>
<dbReference type="InterPro" id="IPR010613">
    <property type="entry name" value="PES"/>
</dbReference>
<dbReference type="PANTHER" id="PTHR12221">
    <property type="entry name" value="PESCADILLO - RELATED"/>
    <property type="match status" value="1"/>
</dbReference>
<dbReference type="PANTHER" id="PTHR12221:SF6">
    <property type="entry name" value="PESCADILLO HOMOLOG"/>
    <property type="match status" value="1"/>
</dbReference>
<dbReference type="Pfam" id="PF06732">
    <property type="entry name" value="Pescadillo_N"/>
    <property type="match status" value="1"/>
</dbReference>
<dbReference type="SUPFAM" id="SSF52113">
    <property type="entry name" value="BRCT domain"/>
    <property type="match status" value="1"/>
</dbReference>
<dbReference type="PROSITE" id="PS50172">
    <property type="entry name" value="BRCT"/>
    <property type="match status" value="1"/>
</dbReference>